<protein>
    <recommendedName>
        <fullName evidence="2">2-dehydropantoate 2-reductase</fullName>
        <ecNumber evidence="2">1.1.1.169</ecNumber>
    </recommendedName>
    <alternativeName>
        <fullName evidence="2">Ketopantoate reductase</fullName>
        <shortName evidence="2">KPR</shortName>
    </alternativeName>
</protein>
<evidence type="ECO:0000250" key="1">
    <source>
        <dbReference type="UniProtKB" id="P0A9J4"/>
    </source>
</evidence>
<evidence type="ECO:0000250" key="2">
    <source>
        <dbReference type="UniProtKB" id="Q5JGC2"/>
    </source>
</evidence>
<evidence type="ECO:0000305" key="3"/>
<sequence>MRVQRVQIMGAGALGSLVGALIQLAGYDVIFVARGKQLEALKKGLRVSGLKNAELKVYCTSQPEDADITFVTVKAYDTETVAKKLAEVDAGVVCSLQNGVGNEEILAKYCRKVLGGVTTYGANLKDYGHVVYAGEGYTYVGEMDGRVSGEAEMVAEVLRDAGMRAEAVNDIEFRIWAKAVVNAAINPITAICRVKNGEVVRNPHLWEVARAVADEGRQVMARMGYEFDAASEVRKVAEMTAENRSSMLQDLERGKRTEVEFINGAIVKKGEEFGIDCAVNRTLLNLVRGVESGL</sequence>
<dbReference type="EC" id="1.1.1.169" evidence="2"/>
<dbReference type="EMBL" id="AE000782">
    <property type="protein sequence ID" value="AAB89553.1"/>
    <property type="molecule type" value="Genomic_DNA"/>
</dbReference>
<dbReference type="PIR" id="F69461">
    <property type="entry name" value="F69461"/>
</dbReference>
<dbReference type="RefSeq" id="WP_010879191.1">
    <property type="nucleotide sequence ID" value="NC_000917.1"/>
</dbReference>
<dbReference type="SMR" id="O28578"/>
<dbReference type="STRING" id="224325.AF_1695"/>
<dbReference type="PaxDb" id="224325-AF_1695"/>
<dbReference type="DNASU" id="1484918"/>
<dbReference type="EnsemblBacteria" id="AAB89553">
    <property type="protein sequence ID" value="AAB89553"/>
    <property type="gene ID" value="AF_1695"/>
</dbReference>
<dbReference type="GeneID" id="1484918"/>
<dbReference type="KEGG" id="afu:AF_1695"/>
<dbReference type="eggNOG" id="arCOG04139">
    <property type="taxonomic scope" value="Archaea"/>
</dbReference>
<dbReference type="HOGENOM" id="CLU_031468_0_1_2"/>
<dbReference type="OrthoDB" id="201845at2157"/>
<dbReference type="PhylomeDB" id="O28578"/>
<dbReference type="UniPathway" id="UPA00241"/>
<dbReference type="Proteomes" id="UP000002199">
    <property type="component" value="Chromosome"/>
</dbReference>
<dbReference type="GO" id="GO:0005737">
    <property type="term" value="C:cytoplasm"/>
    <property type="evidence" value="ECO:0007669"/>
    <property type="project" value="UniProtKB-SubCell"/>
</dbReference>
<dbReference type="GO" id="GO:0008677">
    <property type="term" value="F:2-dehydropantoate 2-reductase activity"/>
    <property type="evidence" value="ECO:0007669"/>
    <property type="project" value="UniProtKB-EC"/>
</dbReference>
<dbReference type="GO" id="GO:0050661">
    <property type="term" value="F:NADP binding"/>
    <property type="evidence" value="ECO:0007669"/>
    <property type="project" value="TreeGrafter"/>
</dbReference>
<dbReference type="GO" id="GO:0015937">
    <property type="term" value="P:coenzyme A biosynthetic process"/>
    <property type="evidence" value="ECO:0007669"/>
    <property type="project" value="UniProtKB-UniPathway"/>
</dbReference>
<dbReference type="GO" id="GO:0015940">
    <property type="term" value="P:pantothenate biosynthetic process"/>
    <property type="evidence" value="ECO:0007669"/>
    <property type="project" value="InterPro"/>
</dbReference>
<dbReference type="FunFam" id="1.10.1040.10:FF:000017">
    <property type="entry name" value="2-dehydropantoate 2-reductase"/>
    <property type="match status" value="1"/>
</dbReference>
<dbReference type="Gene3D" id="1.10.1040.10">
    <property type="entry name" value="N-(1-d-carboxylethyl)-l-norvaline Dehydrogenase, domain 2"/>
    <property type="match status" value="1"/>
</dbReference>
<dbReference type="Gene3D" id="3.40.50.720">
    <property type="entry name" value="NAD(P)-binding Rossmann-like Domain"/>
    <property type="match status" value="1"/>
</dbReference>
<dbReference type="InterPro" id="IPR008927">
    <property type="entry name" value="6-PGluconate_DH-like_C_sf"/>
</dbReference>
<dbReference type="InterPro" id="IPR013328">
    <property type="entry name" value="6PGD_dom2"/>
</dbReference>
<dbReference type="InterPro" id="IPR003710">
    <property type="entry name" value="ApbA"/>
</dbReference>
<dbReference type="InterPro" id="IPR050838">
    <property type="entry name" value="Ketopantoate_reductase"/>
</dbReference>
<dbReference type="InterPro" id="IPR013752">
    <property type="entry name" value="KPA_reductase"/>
</dbReference>
<dbReference type="InterPro" id="IPR013332">
    <property type="entry name" value="KPR_N"/>
</dbReference>
<dbReference type="InterPro" id="IPR036291">
    <property type="entry name" value="NAD(P)-bd_dom_sf"/>
</dbReference>
<dbReference type="NCBIfam" id="TIGR00745">
    <property type="entry name" value="apbA_panE"/>
    <property type="match status" value="1"/>
</dbReference>
<dbReference type="PANTHER" id="PTHR43765:SF2">
    <property type="entry name" value="2-DEHYDROPANTOATE 2-REDUCTASE"/>
    <property type="match status" value="1"/>
</dbReference>
<dbReference type="PANTHER" id="PTHR43765">
    <property type="entry name" value="2-DEHYDROPANTOATE 2-REDUCTASE-RELATED"/>
    <property type="match status" value="1"/>
</dbReference>
<dbReference type="Pfam" id="PF02558">
    <property type="entry name" value="ApbA"/>
    <property type="match status" value="1"/>
</dbReference>
<dbReference type="Pfam" id="PF08546">
    <property type="entry name" value="ApbA_C"/>
    <property type="match status" value="1"/>
</dbReference>
<dbReference type="SUPFAM" id="SSF48179">
    <property type="entry name" value="6-phosphogluconate dehydrogenase C-terminal domain-like"/>
    <property type="match status" value="1"/>
</dbReference>
<dbReference type="SUPFAM" id="SSF51735">
    <property type="entry name" value="NAD(P)-binding Rossmann-fold domains"/>
    <property type="match status" value="1"/>
</dbReference>
<organism>
    <name type="scientific">Archaeoglobus fulgidus (strain ATCC 49558 / DSM 4304 / JCM 9628 / NBRC 100126 / VC-16)</name>
    <dbReference type="NCBI Taxonomy" id="224325"/>
    <lineage>
        <taxon>Archaea</taxon>
        <taxon>Methanobacteriati</taxon>
        <taxon>Methanobacteriota</taxon>
        <taxon>Archaeoglobi</taxon>
        <taxon>Archaeoglobales</taxon>
        <taxon>Archaeoglobaceae</taxon>
        <taxon>Archaeoglobus</taxon>
    </lineage>
</organism>
<comment type="function">
    <text evidence="2">Catalyzes the NAD(P)H-dependent reduction of ketopantoate into pantoic acid.</text>
</comment>
<comment type="catalytic activity">
    <reaction evidence="2">
        <text>(R)-pantoate + NAD(+) = 2-dehydropantoate + NADH + H(+)</text>
        <dbReference type="Rhea" id="RHEA:61292"/>
        <dbReference type="ChEBI" id="CHEBI:11561"/>
        <dbReference type="ChEBI" id="CHEBI:15378"/>
        <dbReference type="ChEBI" id="CHEBI:15980"/>
        <dbReference type="ChEBI" id="CHEBI:57540"/>
        <dbReference type="ChEBI" id="CHEBI:57945"/>
    </reaction>
    <physiologicalReaction direction="right-to-left" evidence="2">
        <dbReference type="Rhea" id="RHEA:61294"/>
    </physiologicalReaction>
</comment>
<comment type="catalytic activity">
    <reaction evidence="2">
        <text>(R)-pantoate + NADP(+) = 2-dehydropantoate + NADPH + H(+)</text>
        <dbReference type="Rhea" id="RHEA:16233"/>
        <dbReference type="ChEBI" id="CHEBI:11561"/>
        <dbReference type="ChEBI" id="CHEBI:15378"/>
        <dbReference type="ChEBI" id="CHEBI:15980"/>
        <dbReference type="ChEBI" id="CHEBI:57783"/>
        <dbReference type="ChEBI" id="CHEBI:58349"/>
        <dbReference type="EC" id="1.1.1.169"/>
    </reaction>
    <physiologicalReaction direction="right-to-left" evidence="2">
        <dbReference type="Rhea" id="RHEA:16235"/>
    </physiologicalReaction>
</comment>
<comment type="pathway">
    <text evidence="2">Cofactor biosynthesis; coenzyme A biosynthesis.</text>
</comment>
<comment type="subcellular location">
    <subcellularLocation>
        <location evidence="2">Cytoplasm</location>
    </subcellularLocation>
</comment>
<comment type="similarity">
    <text evidence="3">Belongs to the ketopantoate reductase family.</text>
</comment>
<feature type="chain" id="PRO_0000157322" description="2-dehydropantoate 2-reductase">
    <location>
        <begin position="1"/>
        <end position="294"/>
    </location>
</feature>
<feature type="active site" description="Proton donor" evidence="1">
    <location>
        <position position="178"/>
    </location>
</feature>
<feature type="binding site" evidence="2">
    <location>
        <begin position="10"/>
        <end position="15"/>
    </location>
    <ligand>
        <name>NADP(+)</name>
        <dbReference type="ChEBI" id="CHEBI:58349"/>
    </ligand>
</feature>
<feature type="binding site" evidence="2">
    <location>
        <position position="34"/>
    </location>
    <ligand>
        <name>NADP(+)</name>
        <dbReference type="ChEBI" id="CHEBI:58349"/>
    </ligand>
</feature>
<feature type="binding site" evidence="2">
    <location>
        <position position="74"/>
    </location>
    <ligand>
        <name>NADP(+)</name>
        <dbReference type="ChEBI" id="CHEBI:58349"/>
    </ligand>
</feature>
<feature type="binding site" evidence="2">
    <location>
        <position position="98"/>
    </location>
    <ligand>
        <name>NADP(+)</name>
        <dbReference type="ChEBI" id="CHEBI:58349"/>
    </ligand>
</feature>
<feature type="binding site" evidence="2">
    <location>
        <position position="122"/>
    </location>
    <ligand>
        <name>NADP(+)</name>
        <dbReference type="ChEBI" id="CHEBI:58349"/>
    </ligand>
</feature>
<feature type="binding site" evidence="2">
    <location>
        <position position="178"/>
    </location>
    <ligand>
        <name>substrate</name>
    </ligand>
</feature>
<feature type="binding site" evidence="2">
    <location>
        <position position="182"/>
    </location>
    <ligand>
        <name>substrate</name>
    </ligand>
</feature>
<feature type="binding site" evidence="2">
    <location>
        <position position="186"/>
    </location>
    <ligand>
        <name>substrate</name>
    </ligand>
</feature>
<feature type="binding site" evidence="2">
    <location>
        <position position="196"/>
    </location>
    <ligand>
        <name>substrate</name>
    </ligand>
</feature>
<feature type="binding site" evidence="2">
    <location>
        <begin position="243"/>
        <end position="246"/>
    </location>
    <ligand>
        <name>substrate</name>
    </ligand>
</feature>
<feature type="binding site" evidence="2">
    <location>
        <position position="258"/>
    </location>
    <ligand>
        <name>NADP(+)</name>
        <dbReference type="ChEBI" id="CHEBI:58349"/>
    </ligand>
</feature>
<name>PANE_ARCFU</name>
<proteinExistence type="inferred from homology"/>
<reference key="1">
    <citation type="journal article" date="1997" name="Nature">
        <title>The complete genome sequence of the hyperthermophilic, sulphate-reducing archaeon Archaeoglobus fulgidus.</title>
        <authorList>
            <person name="Klenk H.-P."/>
            <person name="Clayton R.A."/>
            <person name="Tomb J.-F."/>
            <person name="White O."/>
            <person name="Nelson K.E."/>
            <person name="Ketchum K.A."/>
            <person name="Dodson R.J."/>
            <person name="Gwinn M.L."/>
            <person name="Hickey E.K."/>
            <person name="Peterson J.D."/>
            <person name="Richardson D.L."/>
            <person name="Kerlavage A.R."/>
            <person name="Graham D.E."/>
            <person name="Kyrpides N.C."/>
            <person name="Fleischmann R.D."/>
            <person name="Quackenbush J."/>
            <person name="Lee N.H."/>
            <person name="Sutton G.G."/>
            <person name="Gill S.R."/>
            <person name="Kirkness E.F."/>
            <person name="Dougherty B.A."/>
            <person name="McKenney K."/>
            <person name="Adams M.D."/>
            <person name="Loftus B.J."/>
            <person name="Peterson S.N."/>
            <person name="Reich C.I."/>
            <person name="McNeil L.K."/>
            <person name="Badger J.H."/>
            <person name="Glodek A."/>
            <person name="Zhou L."/>
            <person name="Overbeek R."/>
            <person name="Gocayne J.D."/>
            <person name="Weidman J.F."/>
            <person name="McDonald L.A."/>
            <person name="Utterback T.R."/>
            <person name="Cotton M.D."/>
            <person name="Spriggs T."/>
            <person name="Artiach P."/>
            <person name="Kaine B.P."/>
            <person name="Sykes S.M."/>
            <person name="Sadow P.W."/>
            <person name="D'Andrea K.P."/>
            <person name="Bowman C."/>
            <person name="Fujii C."/>
            <person name="Garland S.A."/>
            <person name="Mason T.M."/>
            <person name="Olsen G.J."/>
            <person name="Fraser C.M."/>
            <person name="Smith H.O."/>
            <person name="Woese C.R."/>
            <person name="Venter J.C."/>
        </authorList>
    </citation>
    <scope>NUCLEOTIDE SEQUENCE [LARGE SCALE GENOMIC DNA]</scope>
    <source>
        <strain>ATCC 49558 / DSM 4304 / JCM 9628 / NBRC 100126 / VC-16</strain>
    </source>
</reference>
<keyword id="KW-0173">Coenzyme A biosynthesis</keyword>
<keyword id="KW-0963">Cytoplasm</keyword>
<keyword id="KW-0520">NAD</keyword>
<keyword id="KW-0521">NADP</keyword>
<keyword id="KW-0560">Oxidoreductase</keyword>
<keyword id="KW-1185">Reference proteome</keyword>
<gene>
    <name type="ordered locus">AF_1695</name>
</gene>
<accession>O28578</accession>